<reference key="1">
    <citation type="journal article" date="2011" name="Stand. Genomic Sci.">
        <title>Complete genome sequence of Rhodospirillum rubrum type strain (S1).</title>
        <authorList>
            <person name="Munk A.C."/>
            <person name="Copeland A."/>
            <person name="Lucas S."/>
            <person name="Lapidus A."/>
            <person name="Del Rio T.G."/>
            <person name="Barry K."/>
            <person name="Detter J.C."/>
            <person name="Hammon N."/>
            <person name="Israni S."/>
            <person name="Pitluck S."/>
            <person name="Brettin T."/>
            <person name="Bruce D."/>
            <person name="Han C."/>
            <person name="Tapia R."/>
            <person name="Gilna P."/>
            <person name="Schmutz J."/>
            <person name="Larimer F."/>
            <person name="Land M."/>
            <person name="Kyrpides N.C."/>
            <person name="Mavromatis K."/>
            <person name="Richardson P."/>
            <person name="Rohde M."/>
            <person name="Goeker M."/>
            <person name="Klenk H.P."/>
            <person name="Zhang Y."/>
            <person name="Roberts G.P."/>
            <person name="Reslewic S."/>
            <person name="Schwartz D.C."/>
        </authorList>
    </citation>
    <scope>NUCLEOTIDE SEQUENCE [LARGE SCALE GENOMIC DNA]</scope>
    <source>
        <strain>ATCC 11170 / ATH 1.1.1 / DSM 467 / LMG 4362 / NCIMB 8255 / S1</strain>
    </source>
</reference>
<comment type="catalytic activity">
    <reaction evidence="1">
        <text>tRNA(His) + L-histidine + ATP = L-histidyl-tRNA(His) + AMP + diphosphate + H(+)</text>
        <dbReference type="Rhea" id="RHEA:17313"/>
        <dbReference type="Rhea" id="RHEA-COMP:9665"/>
        <dbReference type="Rhea" id="RHEA-COMP:9689"/>
        <dbReference type="ChEBI" id="CHEBI:15378"/>
        <dbReference type="ChEBI" id="CHEBI:30616"/>
        <dbReference type="ChEBI" id="CHEBI:33019"/>
        <dbReference type="ChEBI" id="CHEBI:57595"/>
        <dbReference type="ChEBI" id="CHEBI:78442"/>
        <dbReference type="ChEBI" id="CHEBI:78527"/>
        <dbReference type="ChEBI" id="CHEBI:456215"/>
        <dbReference type="EC" id="6.1.1.21"/>
    </reaction>
</comment>
<comment type="subunit">
    <text evidence="1">Homodimer.</text>
</comment>
<comment type="subcellular location">
    <subcellularLocation>
        <location evidence="1">Cytoplasm</location>
    </subcellularLocation>
</comment>
<comment type="similarity">
    <text evidence="1">Belongs to the class-II aminoacyl-tRNA synthetase family.</text>
</comment>
<name>SYH_RHORT</name>
<evidence type="ECO:0000255" key="1">
    <source>
        <dbReference type="HAMAP-Rule" id="MF_00127"/>
    </source>
</evidence>
<gene>
    <name evidence="1" type="primary">hisS</name>
    <name type="ordered locus">Rru_A0748</name>
</gene>
<organism>
    <name type="scientific">Rhodospirillum rubrum (strain ATCC 11170 / ATH 1.1.1 / DSM 467 / LMG 4362 / NCIMB 8255 / S1)</name>
    <dbReference type="NCBI Taxonomy" id="269796"/>
    <lineage>
        <taxon>Bacteria</taxon>
        <taxon>Pseudomonadati</taxon>
        <taxon>Pseudomonadota</taxon>
        <taxon>Alphaproteobacteria</taxon>
        <taxon>Rhodospirillales</taxon>
        <taxon>Rhodospirillaceae</taxon>
        <taxon>Rhodospirillum</taxon>
    </lineage>
</organism>
<keyword id="KW-0030">Aminoacyl-tRNA synthetase</keyword>
<keyword id="KW-0067">ATP-binding</keyword>
<keyword id="KW-0963">Cytoplasm</keyword>
<keyword id="KW-0436">Ligase</keyword>
<keyword id="KW-0547">Nucleotide-binding</keyword>
<keyword id="KW-0648">Protein biosynthesis</keyword>
<keyword id="KW-1185">Reference proteome</keyword>
<feature type="chain" id="PRO_1000016432" description="Histidine--tRNA ligase">
    <location>
        <begin position="1"/>
        <end position="415"/>
    </location>
</feature>
<protein>
    <recommendedName>
        <fullName evidence="1">Histidine--tRNA ligase</fullName>
        <ecNumber evidence="1">6.1.1.21</ecNumber>
    </recommendedName>
    <alternativeName>
        <fullName evidence="1">Histidyl-tRNA synthetase</fullName>
        <shortName evidence="1">HisRS</shortName>
    </alternativeName>
</protein>
<sequence>MAALQPVRGTHDYLPDEARSHRHVEETARTVAERFGFGEIITPIFEFTDVFARTLGDTSDVVTKEMYTFTDRSGDSLTLRPENTAGVARAFISGGLAQNVPVKLFYRGPMFRHERPQKGRLRQFHQVGVELIGAENPLADVEVIALGSQLLGALGVGGRTILHLNSLGDPESREAYRAALVSYLSGHRDSLSRDSLERLERNPLRVLDSKDEGDRAVVAGAPRLIDHLNEASRAFFAGVTGGLEALGIPFEIDPLLVRGLDYYGHTAFEFVTTDLGAQGTVMAGGRYDGLIRQMGGSQTPGVGWAAGVERLSMLMAADRVGAPRPLAMIPAGPDDEVEALKLAHALRQGGLFVDFGYSGNLGKRMKRANRINARAAIILGGEERANGTVVVRDLDSGEQETIGLAVLEEFLARFL</sequence>
<accession>Q2RWE3</accession>
<proteinExistence type="inferred from homology"/>
<dbReference type="EC" id="6.1.1.21" evidence="1"/>
<dbReference type="EMBL" id="CP000230">
    <property type="protein sequence ID" value="ABC21552.1"/>
    <property type="molecule type" value="Genomic_DNA"/>
</dbReference>
<dbReference type="RefSeq" id="WP_011388506.1">
    <property type="nucleotide sequence ID" value="NC_007643.1"/>
</dbReference>
<dbReference type="RefSeq" id="YP_425839.1">
    <property type="nucleotide sequence ID" value="NC_007643.1"/>
</dbReference>
<dbReference type="SMR" id="Q2RWE3"/>
<dbReference type="STRING" id="269796.Rru_A0748"/>
<dbReference type="EnsemblBacteria" id="ABC21552">
    <property type="protein sequence ID" value="ABC21552"/>
    <property type="gene ID" value="Rru_A0748"/>
</dbReference>
<dbReference type="KEGG" id="rru:Rru_A0748"/>
<dbReference type="PATRIC" id="fig|269796.9.peg.801"/>
<dbReference type="eggNOG" id="COG0124">
    <property type="taxonomic scope" value="Bacteria"/>
</dbReference>
<dbReference type="HOGENOM" id="CLU_025113_1_0_5"/>
<dbReference type="PhylomeDB" id="Q2RWE3"/>
<dbReference type="Proteomes" id="UP000001929">
    <property type="component" value="Chromosome"/>
</dbReference>
<dbReference type="GO" id="GO:0005737">
    <property type="term" value="C:cytoplasm"/>
    <property type="evidence" value="ECO:0007669"/>
    <property type="project" value="UniProtKB-SubCell"/>
</dbReference>
<dbReference type="GO" id="GO:0005524">
    <property type="term" value="F:ATP binding"/>
    <property type="evidence" value="ECO:0007669"/>
    <property type="project" value="UniProtKB-UniRule"/>
</dbReference>
<dbReference type="GO" id="GO:0004821">
    <property type="term" value="F:histidine-tRNA ligase activity"/>
    <property type="evidence" value="ECO:0007669"/>
    <property type="project" value="UniProtKB-UniRule"/>
</dbReference>
<dbReference type="GO" id="GO:0006427">
    <property type="term" value="P:histidyl-tRNA aminoacylation"/>
    <property type="evidence" value="ECO:0007669"/>
    <property type="project" value="UniProtKB-UniRule"/>
</dbReference>
<dbReference type="CDD" id="cd00773">
    <property type="entry name" value="HisRS-like_core"/>
    <property type="match status" value="1"/>
</dbReference>
<dbReference type="CDD" id="cd00859">
    <property type="entry name" value="HisRS_anticodon"/>
    <property type="match status" value="1"/>
</dbReference>
<dbReference type="Gene3D" id="3.40.50.800">
    <property type="entry name" value="Anticodon-binding domain"/>
    <property type="match status" value="1"/>
</dbReference>
<dbReference type="Gene3D" id="3.30.930.10">
    <property type="entry name" value="Bira Bifunctional Protein, Domain 2"/>
    <property type="match status" value="1"/>
</dbReference>
<dbReference type="HAMAP" id="MF_00127">
    <property type="entry name" value="His_tRNA_synth"/>
    <property type="match status" value="1"/>
</dbReference>
<dbReference type="InterPro" id="IPR006195">
    <property type="entry name" value="aa-tRNA-synth_II"/>
</dbReference>
<dbReference type="InterPro" id="IPR045864">
    <property type="entry name" value="aa-tRNA-synth_II/BPL/LPL"/>
</dbReference>
<dbReference type="InterPro" id="IPR004154">
    <property type="entry name" value="Anticodon-bd"/>
</dbReference>
<dbReference type="InterPro" id="IPR036621">
    <property type="entry name" value="Anticodon-bd_dom_sf"/>
</dbReference>
<dbReference type="InterPro" id="IPR015807">
    <property type="entry name" value="His-tRNA-ligase"/>
</dbReference>
<dbReference type="InterPro" id="IPR041715">
    <property type="entry name" value="HisRS-like_core"/>
</dbReference>
<dbReference type="InterPro" id="IPR004516">
    <property type="entry name" value="HisRS/HisZ"/>
</dbReference>
<dbReference type="InterPro" id="IPR033656">
    <property type="entry name" value="HisRS_anticodon"/>
</dbReference>
<dbReference type="NCBIfam" id="TIGR00442">
    <property type="entry name" value="hisS"/>
    <property type="match status" value="1"/>
</dbReference>
<dbReference type="PANTHER" id="PTHR43707:SF1">
    <property type="entry name" value="HISTIDINE--TRNA LIGASE, MITOCHONDRIAL-RELATED"/>
    <property type="match status" value="1"/>
</dbReference>
<dbReference type="PANTHER" id="PTHR43707">
    <property type="entry name" value="HISTIDYL-TRNA SYNTHETASE"/>
    <property type="match status" value="1"/>
</dbReference>
<dbReference type="Pfam" id="PF03129">
    <property type="entry name" value="HGTP_anticodon"/>
    <property type="match status" value="1"/>
</dbReference>
<dbReference type="Pfam" id="PF13393">
    <property type="entry name" value="tRNA-synt_His"/>
    <property type="match status" value="1"/>
</dbReference>
<dbReference type="PIRSF" id="PIRSF001549">
    <property type="entry name" value="His-tRNA_synth"/>
    <property type="match status" value="1"/>
</dbReference>
<dbReference type="SUPFAM" id="SSF52954">
    <property type="entry name" value="Class II aaRS ABD-related"/>
    <property type="match status" value="1"/>
</dbReference>
<dbReference type="SUPFAM" id="SSF55681">
    <property type="entry name" value="Class II aaRS and biotin synthetases"/>
    <property type="match status" value="1"/>
</dbReference>
<dbReference type="PROSITE" id="PS50862">
    <property type="entry name" value="AA_TRNA_LIGASE_II"/>
    <property type="match status" value="1"/>
</dbReference>